<organism>
    <name type="scientific">Aeropyrum pernix (strain ATCC 700893 / DSM 11879 / JCM 9820 / NBRC 100138 / K1)</name>
    <dbReference type="NCBI Taxonomy" id="272557"/>
    <lineage>
        <taxon>Archaea</taxon>
        <taxon>Thermoproteota</taxon>
        <taxon>Thermoprotei</taxon>
        <taxon>Desulfurococcales</taxon>
        <taxon>Desulfurococcaceae</taxon>
        <taxon>Aeropyrum</taxon>
    </lineage>
</organism>
<proteinExistence type="inferred from homology"/>
<gene>
    <name type="primary">cas4</name>
    <name type="ordered locus">APE_1239.1</name>
</gene>
<feature type="chain" id="PRO_0000417890" description="CRISPR-associated exonuclease Cas4">
    <location>
        <begin position="1"/>
        <end position="199"/>
    </location>
</feature>
<feature type="binding site" evidence="1">
    <location>
        <position position="13"/>
    </location>
    <ligand>
        <name>[4Fe-4S] cluster</name>
        <dbReference type="ChEBI" id="CHEBI:49883"/>
    </ligand>
</feature>
<feature type="binding site" evidence="1">
    <location>
        <position position="77"/>
    </location>
    <ligand>
        <name>Mn(2+)</name>
        <dbReference type="ChEBI" id="CHEBI:29035"/>
    </ligand>
</feature>
<feature type="binding site" evidence="1">
    <location>
        <position position="91"/>
    </location>
    <ligand>
        <name>Mn(2+)</name>
        <dbReference type="ChEBI" id="CHEBI:29035"/>
    </ligand>
</feature>
<feature type="binding site" evidence="1">
    <location>
        <position position="92"/>
    </location>
    <ligand>
        <name>Mn(2+)</name>
        <dbReference type="ChEBI" id="CHEBI:29035"/>
    </ligand>
</feature>
<feature type="binding site" evidence="1">
    <location>
        <position position="179"/>
    </location>
    <ligand>
        <name>[4Fe-4S] cluster</name>
        <dbReference type="ChEBI" id="CHEBI:49883"/>
    </ligand>
</feature>
<feature type="binding site" evidence="1">
    <location>
        <position position="182"/>
    </location>
    <ligand>
        <name>[4Fe-4S] cluster</name>
        <dbReference type="ChEBI" id="CHEBI:49883"/>
    </ligand>
</feature>
<feature type="binding site" evidence="1">
    <location>
        <position position="188"/>
    </location>
    <ligand>
        <name>[4Fe-4S] cluster</name>
        <dbReference type="ChEBI" id="CHEBI:49883"/>
    </ligand>
</feature>
<protein>
    <recommendedName>
        <fullName>CRISPR-associated exonuclease Cas4</fullName>
        <ecNumber evidence="1">3.1.12.1</ecNumber>
    </recommendedName>
</protein>
<keyword id="KW-0004">4Fe-4S</keyword>
<keyword id="KW-0051">Antiviral defense</keyword>
<keyword id="KW-0269">Exonuclease</keyword>
<keyword id="KW-0378">Hydrolase</keyword>
<keyword id="KW-0408">Iron</keyword>
<keyword id="KW-0411">Iron-sulfur</keyword>
<keyword id="KW-0464">Manganese</keyword>
<keyword id="KW-0479">Metal-binding</keyword>
<keyword id="KW-0540">Nuclease</keyword>
<keyword id="KW-1185">Reference proteome</keyword>
<evidence type="ECO:0000250" key="1">
    <source>
        <dbReference type="UniProtKB" id="Q97TX9"/>
    </source>
</evidence>
<evidence type="ECO:0000305" key="2"/>
<comment type="function">
    <text evidence="1">CRISPR (clustered regularly interspaced short palindromic repeat) is an adaptive immune system that provides protection against mobile genetic elements (viruses, transposable elements and conjugative plasmids). CRISPR clusters contain sequences complementary to antecedent mobile elements and target invading nucleic acids. CRISPR clusters are transcribed and processed into CRISPR RNA (crRNA). This may be a 5' to 3' ssDNA exonuclease (By similarity).</text>
</comment>
<comment type="catalytic activity">
    <reaction evidence="1">
        <text>exonucleolytic cleavage in the 5'- to 3'-direction to yield nucleoside 3'-phosphates.</text>
        <dbReference type="EC" id="3.1.12.1"/>
    </reaction>
</comment>
<comment type="cofactor">
    <cofactor evidence="1">
        <name>Mg(2+)</name>
        <dbReference type="ChEBI" id="CHEBI:18420"/>
    </cofactor>
    <cofactor evidence="1">
        <name>Mn(2+)</name>
        <dbReference type="ChEBI" id="CHEBI:29035"/>
    </cofactor>
    <cofactor evidence="1">
        <name>Cu(2+)</name>
        <dbReference type="ChEBI" id="CHEBI:29036"/>
    </cofactor>
    <text evidence="1">Mg(2+) or Mn(2+) required for ssDNA cleavage activity. Can also utilise Cu(2+).</text>
</comment>
<comment type="cofactor">
    <cofactor evidence="1">
        <name>[4Fe-4S] cluster</name>
        <dbReference type="ChEBI" id="CHEBI:49883"/>
    </cofactor>
    <text evidence="1">Binds 1 [4Fe-4S] cluster per subunit. It may be important for protein stability, since mutation of the Cys that bind the cofactor leads to a colorless, insoluble protein.</text>
</comment>
<comment type="similarity">
    <text evidence="2">Belongs to the CRISPR-associated exonuclease Cas4 family.</text>
</comment>
<reference key="1">
    <citation type="journal article" date="1999" name="DNA Res.">
        <title>Complete genome sequence of an aerobic hyper-thermophilic crenarchaeon, Aeropyrum pernix K1.</title>
        <authorList>
            <person name="Kawarabayasi Y."/>
            <person name="Hino Y."/>
            <person name="Horikawa H."/>
            <person name="Yamazaki S."/>
            <person name="Haikawa Y."/>
            <person name="Jin-no K."/>
            <person name="Takahashi M."/>
            <person name="Sekine M."/>
            <person name="Baba S."/>
            <person name="Ankai A."/>
            <person name="Kosugi H."/>
            <person name="Hosoyama A."/>
            <person name="Fukui S."/>
            <person name="Nagai Y."/>
            <person name="Nishijima K."/>
            <person name="Nakazawa H."/>
            <person name="Takamiya M."/>
            <person name="Masuda S."/>
            <person name="Funahashi T."/>
            <person name="Tanaka T."/>
            <person name="Kudoh Y."/>
            <person name="Yamazaki J."/>
            <person name="Kushida N."/>
            <person name="Oguchi A."/>
            <person name="Aoki K."/>
            <person name="Kubota K."/>
            <person name="Nakamura Y."/>
            <person name="Nomura N."/>
            <person name="Sako Y."/>
            <person name="Kikuchi H."/>
        </authorList>
    </citation>
    <scope>NUCLEOTIDE SEQUENCE [LARGE SCALE GENOMIC DNA]</scope>
    <source>
        <strain>ATCC 700893 / DSM 11879 / JCM 9820 / NBRC 100138 / K1</strain>
    </source>
</reference>
<dbReference type="EC" id="3.1.12.1" evidence="1"/>
<dbReference type="EMBL" id="BA000002">
    <property type="protein sequence ID" value="BAA80228.2"/>
    <property type="molecule type" value="Genomic_DNA"/>
</dbReference>
<dbReference type="PIR" id="F72596">
    <property type="entry name" value="F72596"/>
</dbReference>
<dbReference type="SMR" id="Q9YCL9"/>
<dbReference type="STRING" id="272557.APE_1239.1"/>
<dbReference type="EnsemblBacteria" id="BAA80228">
    <property type="protein sequence ID" value="BAA80228"/>
    <property type="gene ID" value="APE_1239.1"/>
</dbReference>
<dbReference type="KEGG" id="ape:APE_1239.1"/>
<dbReference type="eggNOG" id="arCOG00786">
    <property type="taxonomic scope" value="Archaea"/>
</dbReference>
<dbReference type="Proteomes" id="UP000002518">
    <property type="component" value="Chromosome"/>
</dbReference>
<dbReference type="GO" id="GO:0051539">
    <property type="term" value="F:4 iron, 4 sulfur cluster binding"/>
    <property type="evidence" value="ECO:0000250"/>
    <property type="project" value="UniProtKB"/>
</dbReference>
<dbReference type="GO" id="GO:0030145">
    <property type="term" value="F:manganese ion binding"/>
    <property type="evidence" value="ECO:0000250"/>
    <property type="project" value="UniProtKB"/>
</dbReference>
<dbReference type="GO" id="GO:0045145">
    <property type="term" value="F:single-stranded DNA 5'-3' DNA exonuclease activity"/>
    <property type="evidence" value="ECO:0000250"/>
    <property type="project" value="UniProtKB"/>
</dbReference>
<dbReference type="GO" id="GO:0051607">
    <property type="term" value="P:defense response to virus"/>
    <property type="evidence" value="ECO:0007669"/>
    <property type="project" value="UniProtKB-KW"/>
</dbReference>
<dbReference type="GO" id="GO:0006308">
    <property type="term" value="P:DNA catabolic process"/>
    <property type="evidence" value="ECO:0000250"/>
    <property type="project" value="UniProtKB"/>
</dbReference>
<dbReference type="CDD" id="cd09637">
    <property type="entry name" value="Cas4_I-A_I-B_I-C_I-D_II-B"/>
    <property type="match status" value="1"/>
</dbReference>
<dbReference type="Gene3D" id="3.90.320.10">
    <property type="match status" value="1"/>
</dbReference>
<dbReference type="InterPro" id="IPR051827">
    <property type="entry name" value="Cas4_exonuclease"/>
</dbReference>
<dbReference type="InterPro" id="IPR013343">
    <property type="entry name" value="CRISPR-assoc_prot_Cas4"/>
</dbReference>
<dbReference type="InterPro" id="IPR011604">
    <property type="entry name" value="PDDEXK-like_dom_sf"/>
</dbReference>
<dbReference type="InterPro" id="IPR038726">
    <property type="entry name" value="PDDEXK_AddAB-type"/>
</dbReference>
<dbReference type="NCBIfam" id="TIGR00372">
    <property type="entry name" value="cas4"/>
    <property type="match status" value="1"/>
</dbReference>
<dbReference type="PANTHER" id="PTHR36531">
    <property type="entry name" value="CRISPR-ASSOCIATED EXONUCLEASE CAS4"/>
    <property type="match status" value="1"/>
</dbReference>
<dbReference type="PANTHER" id="PTHR36531:SF6">
    <property type="entry name" value="DNA REPLICATION ATP-DEPENDENT HELICASE_NUCLEASE DNA2"/>
    <property type="match status" value="1"/>
</dbReference>
<dbReference type="Pfam" id="PF12705">
    <property type="entry name" value="PDDEXK_1"/>
    <property type="match status" value="1"/>
</dbReference>
<name>CAS4_AERPE</name>
<sequence>MRPVSMLKEYAYCPRVAYYMEVLRPSYRPTEPMNLSREIYSVDHVRGILRSSGFRIVKEEWAVPLRSKRLGLQGVADGVVVEGSLGIIVVEAKLSVRSNRWLHTRGRHVIFQAAAYALALEETRGYSVDYLAIVSLEDSKTYVVKMSPSLRRDVIRLADDMNKTLDDGLEPPPKPGRKCVACRFRRVCQPWVAERGSER</sequence>
<accession>Q9YCL9</accession>